<keyword id="KW-0963">Cytoplasm</keyword>
<keyword id="KW-0238">DNA-binding</keyword>
<keyword id="KW-1185">Reference proteome</keyword>
<keyword id="KW-0804">Transcription</keyword>
<keyword id="KW-0805">Transcription regulation</keyword>
<accession>A0L4W1</accession>
<proteinExistence type="inferred from homology"/>
<reference key="1">
    <citation type="journal article" date="2009" name="Appl. Environ. Microbiol.">
        <title>Complete genome sequence of the chemolithoautotrophic marine magnetotactic coccus strain MC-1.</title>
        <authorList>
            <person name="Schubbe S."/>
            <person name="Williams T.J."/>
            <person name="Xie G."/>
            <person name="Kiss H.E."/>
            <person name="Brettin T.S."/>
            <person name="Martinez D."/>
            <person name="Ross C.A."/>
            <person name="Schuler D."/>
            <person name="Cox B.L."/>
            <person name="Nealson K.H."/>
            <person name="Bazylinski D.A."/>
        </authorList>
    </citation>
    <scope>NUCLEOTIDE SEQUENCE [LARGE SCALE GENOMIC DNA]</scope>
    <source>
        <strain>ATCC BAA-1437 / JCM 17883 / MC-1</strain>
    </source>
</reference>
<name>Y479_MAGMM</name>
<sequence>MAGHSKWANIKHRKGAQDAKRGKIFTRLIKEITVSARMGGGDAATNPRLRSAITAARAQNLPKDTMDKAIKRGTGELEGVNYEEVRFEGYGPGGVAIIVDCLTDNNNRTVADVRHIFNKYGGNMGTHGCVAFMFDKKGQIMFDAEGINEDAIIEAALEAGAEDVVHEGDSFEVLTDPNDFSDVLEALATAGFATPSEAEVVMRPQNLQQLDEQQASTMLKLYEKLEENEDVQNIYANFDISDEIMETLSA</sequence>
<evidence type="ECO:0000255" key="1">
    <source>
        <dbReference type="HAMAP-Rule" id="MF_00693"/>
    </source>
</evidence>
<organism>
    <name type="scientific">Magnetococcus marinus (strain ATCC BAA-1437 / JCM 17883 / MC-1)</name>
    <dbReference type="NCBI Taxonomy" id="156889"/>
    <lineage>
        <taxon>Bacteria</taxon>
        <taxon>Pseudomonadati</taxon>
        <taxon>Pseudomonadota</taxon>
        <taxon>Alphaproteobacteria</taxon>
        <taxon>Magnetococcales</taxon>
        <taxon>Magnetococcaceae</taxon>
        <taxon>Magnetococcus</taxon>
    </lineage>
</organism>
<feature type="chain" id="PRO_1000045332" description="Probable transcriptional regulatory protein Mmc1_0479">
    <location>
        <begin position="1"/>
        <end position="250"/>
    </location>
</feature>
<protein>
    <recommendedName>
        <fullName evidence="1">Probable transcriptional regulatory protein Mmc1_0479</fullName>
    </recommendedName>
</protein>
<gene>
    <name type="ordered locus">Mmc1_0479</name>
</gene>
<dbReference type="EMBL" id="CP000471">
    <property type="protein sequence ID" value="ABK43004.1"/>
    <property type="molecule type" value="Genomic_DNA"/>
</dbReference>
<dbReference type="RefSeq" id="WP_011712171.1">
    <property type="nucleotide sequence ID" value="NC_008576.1"/>
</dbReference>
<dbReference type="SMR" id="A0L4W1"/>
<dbReference type="STRING" id="156889.Mmc1_0479"/>
<dbReference type="KEGG" id="mgm:Mmc1_0479"/>
<dbReference type="eggNOG" id="COG0217">
    <property type="taxonomic scope" value="Bacteria"/>
</dbReference>
<dbReference type="HOGENOM" id="CLU_062974_2_2_5"/>
<dbReference type="OrthoDB" id="9781053at2"/>
<dbReference type="Proteomes" id="UP000002586">
    <property type="component" value="Chromosome"/>
</dbReference>
<dbReference type="GO" id="GO:0005829">
    <property type="term" value="C:cytosol"/>
    <property type="evidence" value="ECO:0007669"/>
    <property type="project" value="TreeGrafter"/>
</dbReference>
<dbReference type="GO" id="GO:0003677">
    <property type="term" value="F:DNA binding"/>
    <property type="evidence" value="ECO:0007669"/>
    <property type="project" value="UniProtKB-UniRule"/>
</dbReference>
<dbReference type="GO" id="GO:0006355">
    <property type="term" value="P:regulation of DNA-templated transcription"/>
    <property type="evidence" value="ECO:0007669"/>
    <property type="project" value="UniProtKB-UniRule"/>
</dbReference>
<dbReference type="FunFam" id="1.10.10.200:FF:000002">
    <property type="entry name" value="Probable transcriptional regulatory protein CLM62_37755"/>
    <property type="match status" value="1"/>
</dbReference>
<dbReference type="FunFam" id="3.30.70.980:FF:000002">
    <property type="entry name" value="Probable transcriptional regulatory protein YebC"/>
    <property type="match status" value="1"/>
</dbReference>
<dbReference type="Gene3D" id="1.10.10.200">
    <property type="match status" value="1"/>
</dbReference>
<dbReference type="Gene3D" id="3.30.70.980">
    <property type="match status" value="2"/>
</dbReference>
<dbReference type="HAMAP" id="MF_00693">
    <property type="entry name" value="Transcrip_reg_TACO1"/>
    <property type="match status" value="1"/>
</dbReference>
<dbReference type="InterPro" id="IPR017856">
    <property type="entry name" value="Integrase-like_N"/>
</dbReference>
<dbReference type="InterPro" id="IPR048300">
    <property type="entry name" value="TACO1_YebC-like_2nd/3rd_dom"/>
</dbReference>
<dbReference type="InterPro" id="IPR049083">
    <property type="entry name" value="TACO1_YebC_N"/>
</dbReference>
<dbReference type="InterPro" id="IPR002876">
    <property type="entry name" value="Transcrip_reg_TACO1-like"/>
</dbReference>
<dbReference type="InterPro" id="IPR026564">
    <property type="entry name" value="Transcrip_reg_TACO1-like_dom3"/>
</dbReference>
<dbReference type="InterPro" id="IPR029072">
    <property type="entry name" value="YebC-like"/>
</dbReference>
<dbReference type="NCBIfam" id="NF001030">
    <property type="entry name" value="PRK00110.1"/>
    <property type="match status" value="1"/>
</dbReference>
<dbReference type="NCBIfam" id="NF009044">
    <property type="entry name" value="PRK12378.1"/>
    <property type="match status" value="1"/>
</dbReference>
<dbReference type="NCBIfam" id="TIGR01033">
    <property type="entry name" value="YebC/PmpR family DNA-binding transcriptional regulator"/>
    <property type="match status" value="1"/>
</dbReference>
<dbReference type="PANTHER" id="PTHR12532:SF6">
    <property type="entry name" value="TRANSCRIPTIONAL REGULATORY PROTEIN YEBC-RELATED"/>
    <property type="match status" value="1"/>
</dbReference>
<dbReference type="PANTHER" id="PTHR12532">
    <property type="entry name" value="TRANSLATIONAL ACTIVATOR OF CYTOCHROME C OXIDASE 1"/>
    <property type="match status" value="1"/>
</dbReference>
<dbReference type="Pfam" id="PF20772">
    <property type="entry name" value="TACO1_YebC_N"/>
    <property type="match status" value="1"/>
</dbReference>
<dbReference type="Pfam" id="PF01709">
    <property type="entry name" value="Transcrip_reg"/>
    <property type="match status" value="1"/>
</dbReference>
<dbReference type="SUPFAM" id="SSF75625">
    <property type="entry name" value="YebC-like"/>
    <property type="match status" value="1"/>
</dbReference>
<comment type="subcellular location">
    <subcellularLocation>
        <location evidence="1">Cytoplasm</location>
    </subcellularLocation>
</comment>
<comment type="similarity">
    <text evidence="1">Belongs to the TACO1 family.</text>
</comment>